<dbReference type="EC" id="3.6.4.13" evidence="1"/>
<dbReference type="EMBL" id="AE013599">
    <property type="protein sequence ID" value="AAF58294.1"/>
    <property type="molecule type" value="Genomic_DNA"/>
</dbReference>
<dbReference type="EMBL" id="AY118656">
    <property type="protein sequence ID" value="AAM50025.1"/>
    <property type="molecule type" value="mRNA"/>
</dbReference>
<dbReference type="EMBL" id="BT044222">
    <property type="protein sequence ID" value="ACH92287.1"/>
    <property type="molecule type" value="mRNA"/>
</dbReference>
<dbReference type="RefSeq" id="NP_610928.1">
    <property type="nucleotide sequence ID" value="NM_137084.3"/>
</dbReference>
<dbReference type="SMR" id="A1Z9L3"/>
<dbReference type="FunCoup" id="A1Z9L3">
    <property type="interactions" value="1714"/>
</dbReference>
<dbReference type="IntAct" id="A1Z9L3">
    <property type="interactions" value="3"/>
</dbReference>
<dbReference type="STRING" id="7227.FBpp0086647"/>
<dbReference type="PaxDb" id="7227-FBpp0086647"/>
<dbReference type="EnsemblMetazoa" id="FBtr0087518">
    <property type="protein sequence ID" value="FBpp0086647"/>
    <property type="gene ID" value="FBgn0086895"/>
</dbReference>
<dbReference type="GeneID" id="36561"/>
<dbReference type="KEGG" id="dme:Dmel_CG8241"/>
<dbReference type="UCSC" id="CG8241-RA">
    <property type="organism name" value="d. melanogaster"/>
</dbReference>
<dbReference type="AGR" id="FB:FBgn0086895"/>
<dbReference type="CTD" id="36561"/>
<dbReference type="FlyBase" id="FBgn0086895">
    <property type="gene designation" value="pea"/>
</dbReference>
<dbReference type="VEuPathDB" id="VectorBase:FBgn0086895"/>
<dbReference type="eggNOG" id="KOG0922">
    <property type="taxonomic scope" value="Eukaryota"/>
</dbReference>
<dbReference type="GeneTree" id="ENSGT00940000155510"/>
<dbReference type="HOGENOM" id="CLU_001832_2_1_1"/>
<dbReference type="InParanoid" id="A1Z9L3"/>
<dbReference type="OMA" id="MKEVDQV"/>
<dbReference type="OrthoDB" id="10253254at2759"/>
<dbReference type="PhylomeDB" id="A1Z9L3"/>
<dbReference type="Reactome" id="R-DME-72163">
    <property type="pathway name" value="mRNA Splicing - Major Pathway"/>
</dbReference>
<dbReference type="BioGRID-ORCS" id="36561">
    <property type="hits" value="0 hits in 1 CRISPR screen"/>
</dbReference>
<dbReference type="GenomeRNAi" id="36561"/>
<dbReference type="PRO" id="PR:A1Z9L3"/>
<dbReference type="Proteomes" id="UP000000803">
    <property type="component" value="Chromosome 2R"/>
</dbReference>
<dbReference type="Bgee" id="FBgn0086895">
    <property type="expression patterns" value="Expressed in nurse follicle cell (Drosophila) in ovary and 93 other cell types or tissues"/>
</dbReference>
<dbReference type="GO" id="GO:0071013">
    <property type="term" value="C:catalytic step 2 spliceosome"/>
    <property type="evidence" value="ECO:0007005"/>
    <property type="project" value="FlyBase"/>
</dbReference>
<dbReference type="GO" id="GO:0005634">
    <property type="term" value="C:nucleus"/>
    <property type="evidence" value="ECO:0000305"/>
    <property type="project" value="FlyBase"/>
</dbReference>
<dbReference type="GO" id="GO:0071011">
    <property type="term" value="C:precatalytic spliceosome"/>
    <property type="evidence" value="ECO:0007005"/>
    <property type="project" value="FlyBase"/>
</dbReference>
<dbReference type="GO" id="GO:0005681">
    <property type="term" value="C:spliceosomal complex"/>
    <property type="evidence" value="ECO:0000250"/>
    <property type="project" value="FlyBase"/>
</dbReference>
<dbReference type="GO" id="GO:0005524">
    <property type="term" value="F:ATP binding"/>
    <property type="evidence" value="ECO:0007669"/>
    <property type="project" value="UniProtKB-KW"/>
</dbReference>
<dbReference type="GO" id="GO:0016887">
    <property type="term" value="F:ATP hydrolysis activity"/>
    <property type="evidence" value="ECO:0007669"/>
    <property type="project" value="RHEA"/>
</dbReference>
<dbReference type="GO" id="GO:0003723">
    <property type="term" value="F:RNA binding"/>
    <property type="evidence" value="ECO:0000318"/>
    <property type="project" value="GO_Central"/>
</dbReference>
<dbReference type="GO" id="GO:0003724">
    <property type="term" value="F:RNA helicase activity"/>
    <property type="evidence" value="ECO:0000250"/>
    <property type="project" value="FlyBase"/>
</dbReference>
<dbReference type="GO" id="GO:0006325">
    <property type="term" value="P:chromatin organization"/>
    <property type="evidence" value="ECO:0000315"/>
    <property type="project" value="FlyBase"/>
</dbReference>
<dbReference type="GO" id="GO:0030261">
    <property type="term" value="P:chromosome condensation"/>
    <property type="evidence" value="ECO:0007669"/>
    <property type="project" value="UniProtKB-KW"/>
</dbReference>
<dbReference type="GO" id="GO:0000398">
    <property type="term" value="P:mRNA splicing, via spliceosome"/>
    <property type="evidence" value="ECO:0000250"/>
    <property type="project" value="FlyBase"/>
</dbReference>
<dbReference type="GO" id="GO:0048477">
    <property type="term" value="P:oogenesis"/>
    <property type="evidence" value="ECO:0000315"/>
    <property type="project" value="FlyBase"/>
</dbReference>
<dbReference type="GO" id="GO:0000381">
    <property type="term" value="P:regulation of alternative mRNA splicing, via spliceosome"/>
    <property type="evidence" value="ECO:0007001"/>
    <property type="project" value="FlyBase"/>
</dbReference>
<dbReference type="GO" id="GO:0007419">
    <property type="term" value="P:ventral cord development"/>
    <property type="evidence" value="ECO:0007001"/>
    <property type="project" value="FlyBase"/>
</dbReference>
<dbReference type="CDD" id="cd17971">
    <property type="entry name" value="DEXHc_DHX8"/>
    <property type="match status" value="1"/>
</dbReference>
<dbReference type="CDD" id="cd21691">
    <property type="entry name" value="GH2-like_DHX8"/>
    <property type="match status" value="1"/>
</dbReference>
<dbReference type="CDD" id="cd05684">
    <property type="entry name" value="S1_DHX8_helicase"/>
    <property type="match status" value="1"/>
</dbReference>
<dbReference type="CDD" id="cd18791">
    <property type="entry name" value="SF2_C_RHA"/>
    <property type="match status" value="1"/>
</dbReference>
<dbReference type="FunFam" id="2.40.50.140:FF:000061">
    <property type="entry name" value="ATP-dependent RNA helicase DHX8"/>
    <property type="match status" value="1"/>
</dbReference>
<dbReference type="FunFam" id="1.20.120.1080:FF:000001">
    <property type="entry name" value="Pre-mRNA-splicing factor ATP-dependent RNA helicase"/>
    <property type="match status" value="1"/>
</dbReference>
<dbReference type="FunFam" id="3.40.50.300:FF:000101">
    <property type="entry name" value="Pre-mRNA-splicing factor ATP-dependent RNA helicase"/>
    <property type="match status" value="1"/>
</dbReference>
<dbReference type="FunFam" id="3.40.50.300:FF:000191">
    <property type="entry name" value="Pre-mRNA-splicing factor ATP-dependent RNA helicase"/>
    <property type="match status" value="1"/>
</dbReference>
<dbReference type="Gene3D" id="1.20.120.1080">
    <property type="match status" value="1"/>
</dbReference>
<dbReference type="Gene3D" id="2.40.50.140">
    <property type="entry name" value="Nucleic acid-binding proteins"/>
    <property type="match status" value="1"/>
</dbReference>
<dbReference type="Gene3D" id="3.40.50.300">
    <property type="entry name" value="P-loop containing nucleotide triphosphate hydrolases"/>
    <property type="match status" value="2"/>
</dbReference>
<dbReference type="InterPro" id="IPR011709">
    <property type="entry name" value="DEAD-box_helicase_OB_fold"/>
</dbReference>
<dbReference type="InterPro" id="IPR044762">
    <property type="entry name" value="DHX8/Prp22_DEXHc"/>
</dbReference>
<dbReference type="InterPro" id="IPR049588">
    <property type="entry name" value="DHX8_GH2-like"/>
</dbReference>
<dbReference type="InterPro" id="IPR002464">
    <property type="entry name" value="DNA/RNA_helicase_DEAH_CS"/>
</dbReference>
<dbReference type="InterPro" id="IPR048333">
    <property type="entry name" value="HA2_WH"/>
</dbReference>
<dbReference type="InterPro" id="IPR007502">
    <property type="entry name" value="Helicase-assoc_dom"/>
</dbReference>
<dbReference type="InterPro" id="IPR014001">
    <property type="entry name" value="Helicase_ATP-bd"/>
</dbReference>
<dbReference type="InterPro" id="IPR001650">
    <property type="entry name" value="Helicase_C-like"/>
</dbReference>
<dbReference type="InterPro" id="IPR012340">
    <property type="entry name" value="NA-bd_OB-fold"/>
</dbReference>
<dbReference type="InterPro" id="IPR027417">
    <property type="entry name" value="P-loop_NTPase"/>
</dbReference>
<dbReference type="InterPro" id="IPR049621">
    <property type="entry name" value="S1_DHX8_helicase"/>
</dbReference>
<dbReference type="InterPro" id="IPR003029">
    <property type="entry name" value="S1_domain"/>
</dbReference>
<dbReference type="PANTHER" id="PTHR18934">
    <property type="entry name" value="ATP-DEPENDENT RNA HELICASE"/>
    <property type="match status" value="1"/>
</dbReference>
<dbReference type="PANTHER" id="PTHR18934:SF85">
    <property type="entry name" value="ATP-DEPENDENT RNA HELICASE DHX8"/>
    <property type="match status" value="1"/>
</dbReference>
<dbReference type="Pfam" id="PF21010">
    <property type="entry name" value="HA2_C"/>
    <property type="match status" value="1"/>
</dbReference>
<dbReference type="Pfam" id="PF04408">
    <property type="entry name" value="HA2_N"/>
    <property type="match status" value="1"/>
</dbReference>
<dbReference type="Pfam" id="PF00271">
    <property type="entry name" value="Helicase_C"/>
    <property type="match status" value="1"/>
</dbReference>
<dbReference type="Pfam" id="PF07717">
    <property type="entry name" value="OB_NTP_bind"/>
    <property type="match status" value="1"/>
</dbReference>
<dbReference type="Pfam" id="PF00575">
    <property type="entry name" value="S1"/>
    <property type="match status" value="1"/>
</dbReference>
<dbReference type="SMART" id="SM00487">
    <property type="entry name" value="DEXDc"/>
    <property type="match status" value="1"/>
</dbReference>
<dbReference type="SMART" id="SM00847">
    <property type="entry name" value="HA2"/>
    <property type="match status" value="1"/>
</dbReference>
<dbReference type="SMART" id="SM00490">
    <property type="entry name" value="HELICc"/>
    <property type="match status" value="1"/>
</dbReference>
<dbReference type="SMART" id="SM00316">
    <property type="entry name" value="S1"/>
    <property type="match status" value="1"/>
</dbReference>
<dbReference type="SUPFAM" id="SSF50249">
    <property type="entry name" value="Nucleic acid-binding proteins"/>
    <property type="match status" value="1"/>
</dbReference>
<dbReference type="SUPFAM" id="SSF52540">
    <property type="entry name" value="P-loop containing nucleoside triphosphate hydrolases"/>
    <property type="match status" value="1"/>
</dbReference>
<dbReference type="PROSITE" id="PS00690">
    <property type="entry name" value="DEAH_ATP_HELICASE"/>
    <property type="match status" value="1"/>
</dbReference>
<dbReference type="PROSITE" id="PS51192">
    <property type="entry name" value="HELICASE_ATP_BIND_1"/>
    <property type="match status" value="1"/>
</dbReference>
<dbReference type="PROSITE" id="PS51194">
    <property type="entry name" value="HELICASE_CTER"/>
    <property type="match status" value="1"/>
</dbReference>
<dbReference type="PROSITE" id="PS50126">
    <property type="entry name" value="S1"/>
    <property type="match status" value="1"/>
</dbReference>
<name>DHX8_DROME</name>
<reference evidence="14" key="1">
    <citation type="journal article" date="2000" name="Science">
        <title>The genome sequence of Drosophila melanogaster.</title>
        <authorList>
            <person name="Adams M.D."/>
            <person name="Celniker S.E."/>
            <person name="Holt R.A."/>
            <person name="Evans C.A."/>
            <person name="Gocayne J.D."/>
            <person name="Amanatides P.G."/>
            <person name="Scherer S.E."/>
            <person name="Li P.W."/>
            <person name="Hoskins R.A."/>
            <person name="Galle R.F."/>
            <person name="George R.A."/>
            <person name="Lewis S.E."/>
            <person name="Richards S."/>
            <person name="Ashburner M."/>
            <person name="Henderson S.N."/>
            <person name="Sutton G.G."/>
            <person name="Wortman J.R."/>
            <person name="Yandell M.D."/>
            <person name="Zhang Q."/>
            <person name="Chen L.X."/>
            <person name="Brandon R.C."/>
            <person name="Rogers Y.-H.C."/>
            <person name="Blazej R.G."/>
            <person name="Champe M."/>
            <person name="Pfeiffer B.D."/>
            <person name="Wan K.H."/>
            <person name="Doyle C."/>
            <person name="Baxter E.G."/>
            <person name="Helt G."/>
            <person name="Nelson C.R."/>
            <person name="Miklos G.L.G."/>
            <person name="Abril J.F."/>
            <person name="Agbayani A."/>
            <person name="An H.-J."/>
            <person name="Andrews-Pfannkoch C."/>
            <person name="Baldwin D."/>
            <person name="Ballew R.M."/>
            <person name="Basu A."/>
            <person name="Baxendale J."/>
            <person name="Bayraktaroglu L."/>
            <person name="Beasley E.M."/>
            <person name="Beeson K.Y."/>
            <person name="Benos P.V."/>
            <person name="Berman B.P."/>
            <person name="Bhandari D."/>
            <person name="Bolshakov S."/>
            <person name="Borkova D."/>
            <person name="Botchan M.R."/>
            <person name="Bouck J."/>
            <person name="Brokstein P."/>
            <person name="Brottier P."/>
            <person name="Burtis K.C."/>
            <person name="Busam D.A."/>
            <person name="Butler H."/>
            <person name="Cadieu E."/>
            <person name="Center A."/>
            <person name="Chandra I."/>
            <person name="Cherry J.M."/>
            <person name="Cawley S."/>
            <person name="Dahlke C."/>
            <person name="Davenport L.B."/>
            <person name="Davies P."/>
            <person name="de Pablos B."/>
            <person name="Delcher A."/>
            <person name="Deng Z."/>
            <person name="Mays A.D."/>
            <person name="Dew I."/>
            <person name="Dietz S.M."/>
            <person name="Dodson K."/>
            <person name="Doup L.E."/>
            <person name="Downes M."/>
            <person name="Dugan-Rocha S."/>
            <person name="Dunkov B.C."/>
            <person name="Dunn P."/>
            <person name="Durbin K.J."/>
            <person name="Evangelista C.C."/>
            <person name="Ferraz C."/>
            <person name="Ferriera S."/>
            <person name="Fleischmann W."/>
            <person name="Fosler C."/>
            <person name="Gabrielian A.E."/>
            <person name="Garg N.S."/>
            <person name="Gelbart W.M."/>
            <person name="Glasser K."/>
            <person name="Glodek A."/>
            <person name="Gong F."/>
            <person name="Gorrell J.H."/>
            <person name="Gu Z."/>
            <person name="Guan P."/>
            <person name="Harris M."/>
            <person name="Harris N.L."/>
            <person name="Harvey D.A."/>
            <person name="Heiman T.J."/>
            <person name="Hernandez J.R."/>
            <person name="Houck J."/>
            <person name="Hostin D."/>
            <person name="Houston K.A."/>
            <person name="Howland T.J."/>
            <person name="Wei M.-H."/>
            <person name="Ibegwam C."/>
            <person name="Jalali M."/>
            <person name="Kalush F."/>
            <person name="Karpen G.H."/>
            <person name="Ke Z."/>
            <person name="Kennison J.A."/>
            <person name="Ketchum K.A."/>
            <person name="Kimmel B.E."/>
            <person name="Kodira C.D."/>
            <person name="Kraft C.L."/>
            <person name="Kravitz S."/>
            <person name="Kulp D."/>
            <person name="Lai Z."/>
            <person name="Lasko P."/>
            <person name="Lei Y."/>
            <person name="Levitsky A.A."/>
            <person name="Li J.H."/>
            <person name="Li Z."/>
            <person name="Liang Y."/>
            <person name="Lin X."/>
            <person name="Liu X."/>
            <person name="Mattei B."/>
            <person name="McIntosh T.C."/>
            <person name="McLeod M.P."/>
            <person name="McPherson D."/>
            <person name="Merkulov G."/>
            <person name="Milshina N.V."/>
            <person name="Mobarry C."/>
            <person name="Morris J."/>
            <person name="Moshrefi A."/>
            <person name="Mount S.M."/>
            <person name="Moy M."/>
            <person name="Murphy B."/>
            <person name="Murphy L."/>
            <person name="Muzny D.M."/>
            <person name="Nelson D.L."/>
            <person name="Nelson D.R."/>
            <person name="Nelson K.A."/>
            <person name="Nixon K."/>
            <person name="Nusskern D.R."/>
            <person name="Pacleb J.M."/>
            <person name="Palazzolo M."/>
            <person name="Pittman G.S."/>
            <person name="Pan S."/>
            <person name="Pollard J."/>
            <person name="Puri V."/>
            <person name="Reese M.G."/>
            <person name="Reinert K."/>
            <person name="Remington K."/>
            <person name="Saunders R.D.C."/>
            <person name="Scheeler F."/>
            <person name="Shen H."/>
            <person name="Shue B.C."/>
            <person name="Siden-Kiamos I."/>
            <person name="Simpson M."/>
            <person name="Skupski M.P."/>
            <person name="Smith T.J."/>
            <person name="Spier E."/>
            <person name="Spradling A.C."/>
            <person name="Stapleton M."/>
            <person name="Strong R."/>
            <person name="Sun E."/>
            <person name="Svirskas R."/>
            <person name="Tector C."/>
            <person name="Turner R."/>
            <person name="Venter E."/>
            <person name="Wang A.H."/>
            <person name="Wang X."/>
            <person name="Wang Z.-Y."/>
            <person name="Wassarman D.A."/>
            <person name="Weinstock G.M."/>
            <person name="Weissenbach J."/>
            <person name="Williams S.M."/>
            <person name="Woodage T."/>
            <person name="Worley K.C."/>
            <person name="Wu D."/>
            <person name="Yang S."/>
            <person name="Yao Q.A."/>
            <person name="Ye J."/>
            <person name="Yeh R.-F."/>
            <person name="Zaveri J.S."/>
            <person name="Zhan M."/>
            <person name="Zhang G."/>
            <person name="Zhao Q."/>
            <person name="Zheng L."/>
            <person name="Zheng X.H."/>
            <person name="Zhong F.N."/>
            <person name="Zhong W."/>
            <person name="Zhou X."/>
            <person name="Zhu S.C."/>
            <person name="Zhu X."/>
            <person name="Smith H.O."/>
            <person name="Gibbs R.A."/>
            <person name="Myers E.W."/>
            <person name="Rubin G.M."/>
            <person name="Venter J.C."/>
        </authorList>
    </citation>
    <scope>NUCLEOTIDE SEQUENCE [LARGE SCALE GENOMIC DNA]</scope>
    <source>
        <strain>Berkeley</strain>
    </source>
</reference>
<reference evidence="14" key="2">
    <citation type="journal article" date="2002" name="Genome Biol.">
        <title>Annotation of the Drosophila melanogaster euchromatic genome: a systematic review.</title>
        <authorList>
            <person name="Misra S."/>
            <person name="Crosby M.A."/>
            <person name="Mungall C.J."/>
            <person name="Matthews B.B."/>
            <person name="Campbell K.S."/>
            <person name="Hradecky P."/>
            <person name="Huang Y."/>
            <person name="Kaminker J.S."/>
            <person name="Millburn G.H."/>
            <person name="Prochnik S.E."/>
            <person name="Smith C.D."/>
            <person name="Tupy J.L."/>
            <person name="Whitfield E.J."/>
            <person name="Bayraktaroglu L."/>
            <person name="Berman B.P."/>
            <person name="Bettencourt B.R."/>
            <person name="Celniker S.E."/>
            <person name="de Grey A.D.N.J."/>
            <person name="Drysdale R.A."/>
            <person name="Harris N.L."/>
            <person name="Richter J."/>
            <person name="Russo S."/>
            <person name="Schroeder A.J."/>
            <person name="Shu S.Q."/>
            <person name="Stapleton M."/>
            <person name="Yamada C."/>
            <person name="Ashburner M."/>
            <person name="Gelbart W.M."/>
            <person name="Rubin G.M."/>
            <person name="Lewis S.E."/>
        </authorList>
    </citation>
    <scope>GENOME REANNOTATION</scope>
    <source>
        <strain evidence="14">Berkeley</strain>
    </source>
</reference>
<reference evidence="11" key="3">
    <citation type="journal article" date="2002" name="Genome Biol.">
        <title>A Drosophila full-length cDNA resource.</title>
        <authorList>
            <person name="Stapleton M."/>
            <person name="Carlson J.W."/>
            <person name="Brokstein P."/>
            <person name="Yu C."/>
            <person name="Champe M."/>
            <person name="George R.A."/>
            <person name="Guarin H."/>
            <person name="Kronmiller B."/>
            <person name="Pacleb J.M."/>
            <person name="Park S."/>
            <person name="Wan K.H."/>
            <person name="Rubin G.M."/>
            <person name="Celniker S.E."/>
        </authorList>
    </citation>
    <scope>NUCLEOTIDE SEQUENCE [LARGE SCALE MRNA]</scope>
    <source>
        <strain evidence="11">Berkeley</strain>
        <tissue evidence="11">Embryo</tissue>
    </source>
</reference>
<reference evidence="12" key="4">
    <citation type="submission" date="2008-09" db="EMBL/GenBank/DDBJ databases">
        <authorList>
            <person name="Carlson J."/>
            <person name="Booth B."/>
            <person name="Frise E."/>
            <person name="Park S."/>
            <person name="Wan K."/>
            <person name="Yu C."/>
            <person name="Celniker S."/>
        </authorList>
    </citation>
    <scope>NUCLEOTIDE SEQUENCE [LARGE SCALE MRNA]</scope>
    <source>
        <strain evidence="12">Berkeley</strain>
    </source>
</reference>
<reference evidence="10" key="5">
    <citation type="journal article" date="2009" name="Mol. Cell. Biol.">
        <title>Conservation of the protein composition and electron microscopy structure of Drosophila melanogaster and human spliceosomal complexes.</title>
        <authorList>
            <person name="Herold N."/>
            <person name="Will C.L."/>
            <person name="Wolf E."/>
            <person name="Kastner B."/>
            <person name="Urlaub H."/>
            <person name="Luhrmann R."/>
        </authorList>
    </citation>
    <scope>IDENTIFICATION BY MASS SPECTROMETRY</scope>
    <scope>FUNCTION</scope>
    <scope>IDENTIFICATION IN THE SPLICEOSOME C COMPLEX</scope>
    <scope>SUBCELLULAR LOCATION</scope>
</reference>
<reference evidence="10" key="6">
    <citation type="journal article" date="2013" name="PLoS ONE">
        <title>Prp22 and spliceosome components regulate chromatin dynamics in germ-line polyploid cells.</title>
        <authorList>
            <person name="Klusza S."/>
            <person name="Novak A."/>
            <person name="Figueroa S."/>
            <person name="Palmer W."/>
            <person name="Deng W.M."/>
        </authorList>
    </citation>
    <scope>FUNCTION</scope>
    <scope>DISRUPTION PHENOTYPE</scope>
</reference>
<comment type="function">
    <text evidence="2 8 9">Involved in pre-mRNA splicing as component of the spliceosome (PubMed:18981222, PubMed:24244416). Facilitates nuclear export of spliced mRNA by releasing the RNA from the spliceosome (By similarity). Before and after egg-chamber formation, required for nurse-cell chromatin dispersal (NCCD) probably by playing a role in spliceosome localization to chromatin/interchromatin spaces (PubMed:24244416).</text>
</comment>
<comment type="catalytic activity">
    <reaction evidence="1">
        <text>ATP + H2O = ADP + phosphate + H(+)</text>
        <dbReference type="Rhea" id="RHEA:13065"/>
        <dbReference type="ChEBI" id="CHEBI:15377"/>
        <dbReference type="ChEBI" id="CHEBI:15378"/>
        <dbReference type="ChEBI" id="CHEBI:30616"/>
        <dbReference type="ChEBI" id="CHEBI:43474"/>
        <dbReference type="ChEBI" id="CHEBI:456216"/>
        <dbReference type="EC" id="3.6.4.13"/>
    </reaction>
</comment>
<comment type="subunit">
    <text evidence="7">Identified in the spliceosome C complex.</text>
</comment>
<comment type="subcellular location">
    <subcellularLocation>
        <location evidence="7">Nucleus</location>
    </subcellularLocation>
</comment>
<comment type="disruption phenotype">
    <text evidence="8">Lethal. RNAi-mediated knockdown in the germ line results in defective nurse cell morphology.</text>
</comment>
<comment type="similarity">
    <text evidence="10">Belongs to the DEAD box helicase family. DEAH subfamily. DDX8/PRP22 sub-subfamily.</text>
</comment>
<gene>
    <name evidence="13" type="primary">pea</name>
    <name evidence="13" type="synonym">Prp22</name>
    <name evidence="13" type="ORF">CG8241</name>
</gene>
<keyword id="KW-0067">ATP-binding</keyword>
<keyword id="KW-0226">DNA condensation</keyword>
<keyword id="KW-0347">Helicase</keyword>
<keyword id="KW-0378">Hydrolase</keyword>
<keyword id="KW-0507">mRNA processing</keyword>
<keyword id="KW-0508">mRNA splicing</keyword>
<keyword id="KW-0547">Nucleotide-binding</keyword>
<keyword id="KW-0539">Nucleus</keyword>
<keyword id="KW-1185">Reference proteome</keyword>
<keyword id="KW-0747">Spliceosome</keyword>
<protein>
    <recommendedName>
        <fullName evidence="10">ATP-dependent RNA helicase DHX8</fullName>
        <ecNumber evidence="1">3.6.4.13</ecNumber>
    </recommendedName>
    <alternativeName>
        <fullName evidence="13">Peanuts</fullName>
    </alternativeName>
</protein>
<sequence>MDELQKLEYLSLVSKICTELDNHLGINDKDLAEFIIDLENKNRTYDTFRKALLDNGAEFPDSLVQNLQRIINLMRPSRPGGASQEKTVGDKKEDKKSQLLKMFPGLALPNDTYSKKEESDDDEKVKAKPEKHSETHKKTDMSDVDAAMMELEALAPGEGATLVRPHKEVSSRDRHKRRSRDRDTKRRSRSREDRHSDRRRSRSRDKERRRRSRSRDNRRRSRSREDRDRDRDRRHKSSSSRDHHERRRRSRSRSTERRDRRDRSRDCSEKMPPPSAAMTDDPEAGKIYSGKIANIVPFGCFVQLFGLRKRWEGLVHISQLRAEGRVTDVTEVVTRNQTVKVKVMSITGQKVSLSMKEVDQDSGKDLNPLSHAPEDDESLRDRNPDGPFSSSTSMLNLQGNGMEGDEHESRKRVTRISSPERWEIKQMISSGVLDRSEMPDFDEETGLLPKDEDDEADIEIEIVEEEPPFLSGHGRALHDLSPVRIVKNPDGSLAQAAMMQSALSKERREQKMLQREQEIEAMPTSLNKNWIDPLPEDESRSLAANMRGMAAAPPEVPEWKKHVIGGKKSSFGKKTDLTLVEQRQSLPIYKLRDDLIKAVTDNQILIVIGETGSGKTTQITQYLGECGFTARGKIGCTQPRRVAAMSVAKRVAEEYGCRLGQEVGYTIRFEDCTSPETIIKYMTDGMLLRECLMEAELKSYSVIMLDEAHERTIHTDVLFGLLKTAVQKRPELKLIVTSATLDAVKFSQYFFKAPIFTIPGRTFPVEVLYTKEPETDYLDASLITVMQIHLREPPGDILLFLTGQEEIDTACEILYERMKSLGPDVPELIILPVYSALPSEMQTRIFDPAPAGSRKVVIATNIAETSLTIDGIFYVVDPGFVKQKVYNSKTGMDSLVVTPISQAAAKQRAGRAGRTGPGKTYRLYTERAYRDEMLPTPVPEIQRTNLATTVLQLKTMGINDLLHFDFMDAPPVESLVMALEQLHSLSALDDEGLLTRLGRRMAEFPLEPNLSKMLIMSVALQCSDEILTIVSMLSVQNVFYRPKDKQALADQKKAKFNQAEGDHLTLLAVYNSWKNNKFSNAWCYENFVQIRTLKRSQDVRKQLLGIMDRHKLDVVSAGKNSVRIQKAICSGFFRNAAKKDPQEGYRTLVDSQVVYIHPSSALFNRQPEWVIYHELVQTTKEYMREVTTIDPKWLVEFAPSFFRFSDPTKLSKFKKNQRLEPLYNKYEEPNAWRISRVRRRRN</sequence>
<proteinExistence type="evidence at protein level"/>
<accession>A1Z9L3</accession>
<accession>Q8MSQ6</accession>
<evidence type="ECO:0000250" key="1">
    <source>
        <dbReference type="UniProtKB" id="P24384"/>
    </source>
</evidence>
<evidence type="ECO:0000250" key="2">
    <source>
        <dbReference type="UniProtKB" id="Q14562"/>
    </source>
</evidence>
<evidence type="ECO:0000255" key="3">
    <source>
        <dbReference type="PROSITE-ProRule" id="PRU00180"/>
    </source>
</evidence>
<evidence type="ECO:0000255" key="4">
    <source>
        <dbReference type="PROSITE-ProRule" id="PRU00541"/>
    </source>
</evidence>
<evidence type="ECO:0000255" key="5">
    <source>
        <dbReference type="PROSITE-ProRule" id="PRU00542"/>
    </source>
</evidence>
<evidence type="ECO:0000256" key="6">
    <source>
        <dbReference type="SAM" id="MobiDB-lite"/>
    </source>
</evidence>
<evidence type="ECO:0000269" key="7">
    <source>
    </source>
</evidence>
<evidence type="ECO:0000269" key="8">
    <source>
    </source>
</evidence>
<evidence type="ECO:0000303" key="9">
    <source>
    </source>
</evidence>
<evidence type="ECO:0000305" key="10"/>
<evidence type="ECO:0000312" key="11">
    <source>
        <dbReference type="EMBL" id="AAM50025.1"/>
    </source>
</evidence>
<evidence type="ECO:0000312" key="12">
    <source>
        <dbReference type="EMBL" id="ACH92287.1"/>
    </source>
</evidence>
<evidence type="ECO:0000312" key="13">
    <source>
        <dbReference type="FlyBase" id="FBgn0086895"/>
    </source>
</evidence>
<evidence type="ECO:0000312" key="14">
    <source>
        <dbReference type="Proteomes" id="UP000000803"/>
    </source>
</evidence>
<organism evidence="14">
    <name type="scientific">Drosophila melanogaster</name>
    <name type="common">Fruit fly</name>
    <dbReference type="NCBI Taxonomy" id="7227"/>
    <lineage>
        <taxon>Eukaryota</taxon>
        <taxon>Metazoa</taxon>
        <taxon>Ecdysozoa</taxon>
        <taxon>Arthropoda</taxon>
        <taxon>Hexapoda</taxon>
        <taxon>Insecta</taxon>
        <taxon>Pterygota</taxon>
        <taxon>Neoptera</taxon>
        <taxon>Endopterygota</taxon>
        <taxon>Diptera</taxon>
        <taxon>Brachycera</taxon>
        <taxon>Muscomorpha</taxon>
        <taxon>Ephydroidea</taxon>
        <taxon>Drosophilidae</taxon>
        <taxon>Drosophila</taxon>
        <taxon>Sophophora</taxon>
    </lineage>
</organism>
<feature type="chain" id="PRO_0000444533" description="ATP-dependent RNA helicase DHX8">
    <location>
        <begin position="1"/>
        <end position="1242"/>
    </location>
</feature>
<feature type="domain" description="S1 motif" evidence="3">
    <location>
        <begin position="285"/>
        <end position="356"/>
    </location>
</feature>
<feature type="domain" description="Helicase ATP-binding" evidence="4">
    <location>
        <begin position="596"/>
        <end position="759"/>
    </location>
</feature>
<feature type="domain" description="Helicase C-terminal" evidence="5">
    <location>
        <begin position="777"/>
        <end position="957"/>
    </location>
</feature>
<feature type="region of interest" description="Disordered" evidence="6">
    <location>
        <begin position="75"/>
        <end position="283"/>
    </location>
</feature>
<feature type="region of interest" description="Disordered" evidence="6">
    <location>
        <begin position="354"/>
        <end position="449"/>
    </location>
</feature>
<feature type="short sequence motif" description="DEAH box" evidence="4">
    <location>
        <begin position="706"/>
        <end position="709"/>
    </location>
</feature>
<feature type="compositionally biased region" description="Basic and acidic residues" evidence="6">
    <location>
        <begin position="87"/>
        <end position="97"/>
    </location>
</feature>
<feature type="compositionally biased region" description="Basic and acidic residues" evidence="6">
    <location>
        <begin position="113"/>
        <end position="141"/>
    </location>
</feature>
<feature type="compositionally biased region" description="Basic and acidic residues" evidence="6">
    <location>
        <begin position="180"/>
        <end position="196"/>
    </location>
</feature>
<feature type="compositionally biased region" description="Basic residues" evidence="6">
    <location>
        <begin position="197"/>
        <end position="222"/>
    </location>
</feature>
<feature type="compositionally biased region" description="Basic residues" evidence="6">
    <location>
        <begin position="232"/>
        <end position="252"/>
    </location>
</feature>
<feature type="compositionally biased region" description="Basic and acidic residues" evidence="6">
    <location>
        <begin position="253"/>
        <end position="269"/>
    </location>
</feature>
<feature type="compositionally biased region" description="Polar residues" evidence="6">
    <location>
        <begin position="388"/>
        <end position="399"/>
    </location>
</feature>
<feature type="compositionally biased region" description="Acidic residues" evidence="6">
    <location>
        <begin position="439"/>
        <end position="449"/>
    </location>
</feature>
<feature type="binding site" evidence="4">
    <location>
        <begin position="609"/>
        <end position="616"/>
    </location>
    <ligand>
        <name>ATP</name>
        <dbReference type="ChEBI" id="CHEBI:30616"/>
    </ligand>
</feature>
<feature type="sequence conflict" description="In Ref. 3; AAM50025." evidence="10" ref="3">
    <original>K</original>
    <variation>R</variation>
    <location>
        <position position="511"/>
    </location>
</feature>